<evidence type="ECO:0000250" key="1"/>
<evidence type="ECO:0000255" key="2"/>
<evidence type="ECO:0000305" key="3"/>
<keyword id="KW-0027">Amidation</keyword>
<keyword id="KW-0165">Cleavage on pair of basic residues</keyword>
<keyword id="KW-0528">Neurotoxin</keyword>
<keyword id="KW-0964">Secreted</keyword>
<keyword id="KW-0732">Signal</keyword>
<keyword id="KW-0800">Toxin</keyword>
<organism>
    <name type="scientific">Conus ventricosus</name>
    <name type="common">Mediterranean cone</name>
    <dbReference type="NCBI Taxonomy" id="117992"/>
    <lineage>
        <taxon>Eukaryota</taxon>
        <taxon>Metazoa</taxon>
        <taxon>Spiralia</taxon>
        <taxon>Lophotrochozoa</taxon>
        <taxon>Mollusca</taxon>
        <taxon>Gastropoda</taxon>
        <taxon>Caenogastropoda</taxon>
        <taxon>Neogastropoda</taxon>
        <taxon>Conoidea</taxon>
        <taxon>Conidae</taxon>
        <taxon>Conus</taxon>
        <taxon>Lautoconus</taxon>
    </lineage>
</organism>
<feature type="signal peptide" evidence="2">
    <location>
        <begin position="1"/>
        <end position="19"/>
    </location>
</feature>
<feature type="propeptide" id="PRO_0000404989" evidence="2">
    <location>
        <begin position="20"/>
        <end position="43"/>
    </location>
</feature>
<feature type="peptide" id="PRO_0000404990" description="Conotoxin VnMLCL-042" evidence="2">
    <location>
        <begin position="46"/>
        <end position="63"/>
    </location>
</feature>
<feature type="modified residue" description="Methionine amide" evidence="1">
    <location>
        <position position="63"/>
    </location>
</feature>
<name>CT0C4_CONVE</name>
<comment type="subcellular location">
    <subcellularLocation>
        <location evidence="1">Secreted</location>
    </subcellularLocation>
</comment>
<comment type="tissue specificity">
    <text>Expressed by the venom duct.</text>
</comment>
<comment type="miscellaneous">
    <text>The mature peptide does not contain cysteine residue.</text>
</comment>
<comment type="similarity">
    <text evidence="3">Belongs to the conotoxin T superfamily.</text>
</comment>
<reference key="1">
    <citation type="journal article" date="2001" name="Mol. Biol. Evol.">
        <title>Mechanisms for evolving hypervariability: the case of conopeptides.</title>
        <authorList>
            <person name="Conticello S.G."/>
            <person name="Gilad Y."/>
            <person name="Avidan N."/>
            <person name="Ben-Asher E."/>
            <person name="Levy Z."/>
            <person name="Fainzilber M."/>
        </authorList>
    </citation>
    <scope>NUCLEOTIDE SEQUENCE [MRNA]</scope>
    <source>
        <tissue>Venom duct</tissue>
    </source>
</reference>
<accession>Q9BPD3</accession>
<protein>
    <recommendedName>
        <fullName>Conotoxin VnMLCL-042</fullName>
    </recommendedName>
</protein>
<sequence>MLCLPVFIILLLLASPAAPNPLQTRIQSNLIRAGPEDANMKTDKRVISGLLAGILVPLIDAIMG</sequence>
<dbReference type="EMBL" id="AF215001">
    <property type="protein sequence ID" value="AAG60429.1"/>
    <property type="molecule type" value="mRNA"/>
</dbReference>
<dbReference type="ConoServer" id="688">
    <property type="toxin name" value="VnMLCL-042"/>
</dbReference>
<dbReference type="GO" id="GO:0005576">
    <property type="term" value="C:extracellular region"/>
    <property type="evidence" value="ECO:0007669"/>
    <property type="project" value="UniProtKB-SubCell"/>
</dbReference>
<dbReference type="GO" id="GO:0090729">
    <property type="term" value="F:toxin activity"/>
    <property type="evidence" value="ECO:0007669"/>
    <property type="project" value="UniProtKB-KW"/>
</dbReference>
<proteinExistence type="evidence at transcript level"/>